<keyword id="KW-0012">Acyltransferase</keyword>
<keyword id="KW-0963">Cytoplasm</keyword>
<keyword id="KW-0275">Fatty acid biosynthesis</keyword>
<keyword id="KW-0276">Fatty acid metabolism</keyword>
<keyword id="KW-0444">Lipid biosynthesis</keyword>
<keyword id="KW-0443">Lipid metabolism</keyword>
<keyword id="KW-0511">Multifunctional enzyme</keyword>
<keyword id="KW-0808">Transferase</keyword>
<gene>
    <name evidence="1" type="primary">fabH</name>
    <name type="ordered locus">BTH_I1717</name>
</gene>
<proteinExistence type="inferred from homology"/>
<dbReference type="EC" id="2.3.1.180" evidence="1"/>
<dbReference type="EMBL" id="CP000086">
    <property type="protein sequence ID" value="ABC36895.1"/>
    <property type="molecule type" value="Genomic_DNA"/>
</dbReference>
<dbReference type="RefSeq" id="WP_009889988.1">
    <property type="nucleotide sequence ID" value="NZ_CM000438.1"/>
</dbReference>
<dbReference type="SMR" id="Q2SXU7"/>
<dbReference type="GeneID" id="45121446"/>
<dbReference type="KEGG" id="bte:BTH_I1717"/>
<dbReference type="HOGENOM" id="CLU_039592_3_1_4"/>
<dbReference type="UniPathway" id="UPA00094"/>
<dbReference type="Proteomes" id="UP000001930">
    <property type="component" value="Chromosome I"/>
</dbReference>
<dbReference type="GO" id="GO:0005737">
    <property type="term" value="C:cytoplasm"/>
    <property type="evidence" value="ECO:0007669"/>
    <property type="project" value="UniProtKB-SubCell"/>
</dbReference>
<dbReference type="GO" id="GO:0004315">
    <property type="term" value="F:3-oxoacyl-[acyl-carrier-protein] synthase activity"/>
    <property type="evidence" value="ECO:0007669"/>
    <property type="project" value="InterPro"/>
</dbReference>
<dbReference type="GO" id="GO:0033818">
    <property type="term" value="F:beta-ketoacyl-acyl-carrier-protein synthase III activity"/>
    <property type="evidence" value="ECO:0007669"/>
    <property type="project" value="UniProtKB-UniRule"/>
</dbReference>
<dbReference type="GO" id="GO:0006633">
    <property type="term" value="P:fatty acid biosynthetic process"/>
    <property type="evidence" value="ECO:0007669"/>
    <property type="project" value="UniProtKB-UniRule"/>
</dbReference>
<dbReference type="GO" id="GO:0044550">
    <property type="term" value="P:secondary metabolite biosynthetic process"/>
    <property type="evidence" value="ECO:0007669"/>
    <property type="project" value="TreeGrafter"/>
</dbReference>
<dbReference type="CDD" id="cd00830">
    <property type="entry name" value="KAS_III"/>
    <property type="match status" value="1"/>
</dbReference>
<dbReference type="FunFam" id="3.40.47.10:FF:000004">
    <property type="entry name" value="3-oxoacyl-[acyl-carrier-protein] synthase 3"/>
    <property type="match status" value="1"/>
</dbReference>
<dbReference type="Gene3D" id="3.40.47.10">
    <property type="match status" value="2"/>
</dbReference>
<dbReference type="HAMAP" id="MF_01815">
    <property type="entry name" value="FabH"/>
    <property type="match status" value="1"/>
</dbReference>
<dbReference type="InterPro" id="IPR013747">
    <property type="entry name" value="ACP_syn_III_C"/>
</dbReference>
<dbReference type="InterPro" id="IPR013751">
    <property type="entry name" value="ACP_syn_III_N"/>
</dbReference>
<dbReference type="InterPro" id="IPR004655">
    <property type="entry name" value="FabH"/>
</dbReference>
<dbReference type="InterPro" id="IPR016039">
    <property type="entry name" value="Thiolase-like"/>
</dbReference>
<dbReference type="NCBIfam" id="TIGR00747">
    <property type="entry name" value="fabH"/>
    <property type="match status" value="1"/>
</dbReference>
<dbReference type="NCBIfam" id="NF006829">
    <property type="entry name" value="PRK09352.1"/>
    <property type="match status" value="1"/>
</dbReference>
<dbReference type="PANTHER" id="PTHR34069">
    <property type="entry name" value="3-OXOACYL-[ACYL-CARRIER-PROTEIN] SYNTHASE 3"/>
    <property type="match status" value="1"/>
</dbReference>
<dbReference type="PANTHER" id="PTHR34069:SF2">
    <property type="entry name" value="BETA-KETOACYL-[ACYL-CARRIER-PROTEIN] SYNTHASE III"/>
    <property type="match status" value="1"/>
</dbReference>
<dbReference type="Pfam" id="PF08545">
    <property type="entry name" value="ACP_syn_III"/>
    <property type="match status" value="1"/>
</dbReference>
<dbReference type="Pfam" id="PF08541">
    <property type="entry name" value="ACP_syn_III_C"/>
    <property type="match status" value="1"/>
</dbReference>
<dbReference type="SUPFAM" id="SSF53901">
    <property type="entry name" value="Thiolase-like"/>
    <property type="match status" value="1"/>
</dbReference>
<sequence>MAQSTLYSRVLGTGSYLPPDRVTNQELADRLAKDGIETSDEWIVARTGIHARHFAAPDVTTSDLAFVAAQRAIEAADVDPQSIDLIIVATSTPDFVFPSTACLLQNKLGIKNGGAAFDVQAVCSGFAYALAMADSFIRTGQHRTALIVGAETFSRILDFKDRTTCVLFGDGAGAVVLSASEEPGILGSALHADGSYSNILCTPGNVNRGVIAGSAFLHMDGQAVFKLAVNVLEKVAVEALSKAALAPEQIDWLIPHQANIRIMTSTCRKLGLPQERMIVTVDEHGNTSAASIPLALDVAVRDGRIKRGQHVLIEGVGGGFTWGASVFRY</sequence>
<evidence type="ECO:0000255" key="1">
    <source>
        <dbReference type="HAMAP-Rule" id="MF_01815"/>
    </source>
</evidence>
<accession>Q2SXU7</accession>
<feature type="chain" id="PRO_1000070226" description="Beta-ketoacyl-[acyl-carrier-protein] synthase III">
    <location>
        <begin position="1"/>
        <end position="329"/>
    </location>
</feature>
<feature type="region of interest" description="ACP-binding" evidence="1">
    <location>
        <begin position="257"/>
        <end position="261"/>
    </location>
</feature>
<feature type="active site" evidence="1">
    <location>
        <position position="123"/>
    </location>
</feature>
<feature type="active site" evidence="1">
    <location>
        <position position="256"/>
    </location>
</feature>
<feature type="active site" evidence="1">
    <location>
        <position position="286"/>
    </location>
</feature>
<protein>
    <recommendedName>
        <fullName evidence="1">Beta-ketoacyl-[acyl-carrier-protein] synthase III</fullName>
        <shortName evidence="1">Beta-ketoacyl-ACP synthase III</shortName>
        <shortName evidence="1">KAS III</shortName>
        <ecNumber evidence="1">2.3.1.180</ecNumber>
    </recommendedName>
    <alternativeName>
        <fullName evidence="1">3-oxoacyl-[acyl-carrier-protein] synthase 3</fullName>
    </alternativeName>
    <alternativeName>
        <fullName evidence="1">3-oxoacyl-[acyl-carrier-protein] synthase III</fullName>
    </alternativeName>
</protein>
<comment type="function">
    <text evidence="1">Catalyzes the condensation reaction of fatty acid synthesis by the addition to an acyl acceptor of two carbons from malonyl-ACP. Catalyzes the first condensation reaction which initiates fatty acid synthesis and may therefore play a role in governing the total rate of fatty acid production. Possesses both acetoacetyl-ACP synthase and acetyl transacylase activities. Its substrate specificity determines the biosynthesis of branched-chain and/or straight-chain of fatty acids.</text>
</comment>
<comment type="catalytic activity">
    <reaction evidence="1">
        <text>malonyl-[ACP] + acetyl-CoA + H(+) = 3-oxobutanoyl-[ACP] + CO2 + CoA</text>
        <dbReference type="Rhea" id="RHEA:12080"/>
        <dbReference type="Rhea" id="RHEA-COMP:9623"/>
        <dbReference type="Rhea" id="RHEA-COMP:9625"/>
        <dbReference type="ChEBI" id="CHEBI:15378"/>
        <dbReference type="ChEBI" id="CHEBI:16526"/>
        <dbReference type="ChEBI" id="CHEBI:57287"/>
        <dbReference type="ChEBI" id="CHEBI:57288"/>
        <dbReference type="ChEBI" id="CHEBI:78449"/>
        <dbReference type="ChEBI" id="CHEBI:78450"/>
        <dbReference type="EC" id="2.3.1.180"/>
    </reaction>
</comment>
<comment type="pathway">
    <text evidence="1">Lipid metabolism; fatty acid biosynthesis.</text>
</comment>
<comment type="subunit">
    <text evidence="1">Homodimer.</text>
</comment>
<comment type="subcellular location">
    <subcellularLocation>
        <location evidence="1">Cytoplasm</location>
    </subcellularLocation>
</comment>
<comment type="domain">
    <text evidence="1">The last Arg residue of the ACP-binding site is essential for the weak association between ACP/AcpP and FabH.</text>
</comment>
<comment type="similarity">
    <text evidence="1">Belongs to the thiolase-like superfamily. FabH family.</text>
</comment>
<name>FABH_BURTA</name>
<organism>
    <name type="scientific">Burkholderia thailandensis (strain ATCC 700388 / DSM 13276 / CCUG 48851 / CIP 106301 / E264)</name>
    <dbReference type="NCBI Taxonomy" id="271848"/>
    <lineage>
        <taxon>Bacteria</taxon>
        <taxon>Pseudomonadati</taxon>
        <taxon>Pseudomonadota</taxon>
        <taxon>Betaproteobacteria</taxon>
        <taxon>Burkholderiales</taxon>
        <taxon>Burkholderiaceae</taxon>
        <taxon>Burkholderia</taxon>
        <taxon>pseudomallei group</taxon>
    </lineage>
</organism>
<reference key="1">
    <citation type="journal article" date="2005" name="BMC Genomics">
        <title>Bacterial genome adaptation to niches: divergence of the potential virulence genes in three Burkholderia species of different survival strategies.</title>
        <authorList>
            <person name="Kim H.S."/>
            <person name="Schell M.A."/>
            <person name="Yu Y."/>
            <person name="Ulrich R.L."/>
            <person name="Sarria S.H."/>
            <person name="Nierman W.C."/>
            <person name="DeShazer D."/>
        </authorList>
    </citation>
    <scope>NUCLEOTIDE SEQUENCE [LARGE SCALE GENOMIC DNA]</scope>
    <source>
        <strain>ATCC 700388 / DSM 13276 / CCUG 48851 / CIP 106301 / E264</strain>
    </source>
</reference>